<evidence type="ECO:0000255" key="1">
    <source>
        <dbReference type="HAMAP-Rule" id="MF_00529"/>
    </source>
</evidence>
<gene>
    <name evidence="1" type="primary">nifW</name>
    <name type="ordered locus">Npun_R0383</name>
</gene>
<accession>B2J5Z9</accession>
<organism>
    <name type="scientific">Nostoc punctiforme (strain ATCC 29133 / PCC 73102)</name>
    <dbReference type="NCBI Taxonomy" id="63737"/>
    <lineage>
        <taxon>Bacteria</taxon>
        <taxon>Bacillati</taxon>
        <taxon>Cyanobacteriota</taxon>
        <taxon>Cyanophyceae</taxon>
        <taxon>Nostocales</taxon>
        <taxon>Nostocaceae</taxon>
        <taxon>Nostoc</taxon>
    </lineage>
</organism>
<dbReference type="EMBL" id="CP001037">
    <property type="protein sequence ID" value="ACC79165.1"/>
    <property type="molecule type" value="Genomic_DNA"/>
</dbReference>
<dbReference type="RefSeq" id="WP_012407191.1">
    <property type="nucleotide sequence ID" value="NC_010628.1"/>
</dbReference>
<dbReference type="SMR" id="B2J5Z9"/>
<dbReference type="STRING" id="63737.Npun_R0383"/>
<dbReference type="EnsemblBacteria" id="ACC79165">
    <property type="protein sequence ID" value="ACC79165"/>
    <property type="gene ID" value="Npun_R0383"/>
</dbReference>
<dbReference type="KEGG" id="npu:Npun_R0383"/>
<dbReference type="eggNOG" id="ENOG50330W8">
    <property type="taxonomic scope" value="Bacteria"/>
</dbReference>
<dbReference type="HOGENOM" id="CLU_145318_1_0_3"/>
<dbReference type="OrthoDB" id="9811868at2"/>
<dbReference type="PhylomeDB" id="B2J5Z9"/>
<dbReference type="Proteomes" id="UP000001191">
    <property type="component" value="Chromosome"/>
</dbReference>
<dbReference type="GO" id="GO:0009399">
    <property type="term" value="P:nitrogen fixation"/>
    <property type="evidence" value="ECO:0007669"/>
    <property type="project" value="UniProtKB-UniRule"/>
</dbReference>
<dbReference type="HAMAP" id="MF_00529">
    <property type="entry name" value="NifW"/>
    <property type="match status" value="1"/>
</dbReference>
<dbReference type="InterPro" id="IPR004893">
    <property type="entry name" value="NifW"/>
</dbReference>
<dbReference type="NCBIfam" id="NF010702">
    <property type="entry name" value="PRK14102.1"/>
    <property type="match status" value="1"/>
</dbReference>
<dbReference type="Pfam" id="PF03206">
    <property type="entry name" value="NifW"/>
    <property type="match status" value="1"/>
</dbReference>
<dbReference type="PIRSF" id="PIRSF005790">
    <property type="entry name" value="NifW"/>
    <property type="match status" value="1"/>
</dbReference>
<keyword id="KW-0535">Nitrogen fixation</keyword>
<keyword id="KW-1185">Reference proteome</keyword>
<protein>
    <recommendedName>
        <fullName evidence="1">Nitrogenase-stabilizing/protective protein NifW</fullName>
    </recommendedName>
</protein>
<reference key="1">
    <citation type="journal article" date="2013" name="Plant Physiol.">
        <title>A Nostoc punctiforme Sugar Transporter Necessary to Establish a Cyanobacterium-Plant Symbiosis.</title>
        <authorList>
            <person name="Ekman M."/>
            <person name="Picossi S."/>
            <person name="Campbell E.L."/>
            <person name="Meeks J.C."/>
            <person name="Flores E."/>
        </authorList>
    </citation>
    <scope>NUCLEOTIDE SEQUENCE [LARGE SCALE GENOMIC DNA]</scope>
    <source>
        <strain>ATCC 29133 / PCC 73102</strain>
    </source>
</reference>
<feature type="chain" id="PRO_1000127811" description="Nitrogenase-stabilizing/protective protein NifW">
    <location>
        <begin position="1"/>
        <end position="105"/>
    </location>
</feature>
<comment type="function">
    <text evidence="1">May protect the nitrogenase Fe-Mo protein from oxidative damage.</text>
</comment>
<comment type="subunit">
    <text evidence="1">Homotrimer; associates with NifD.</text>
</comment>
<comment type="similarity">
    <text evidence="1">Belongs to the NifW family.</text>
</comment>
<sequence>MTGTIDEFKKLVDAEEFFQFFNMSYDLEVVNVHRLHILKKFSQYMHEIDENSPDLSQEEKLNQYSLALQKAYQVFIESTAYEQKLFKVFNDKPKNVVTLTEITSD</sequence>
<proteinExistence type="inferred from homology"/>
<name>NIFW_NOSP7</name>